<name>MLR_PENVA</name>
<dbReference type="EMBL" id="EU449515">
    <property type="protein sequence ID" value="ACC76803.1"/>
    <property type="molecule type" value="mRNA"/>
</dbReference>
<dbReference type="EMBL" id="QCYY01002691">
    <property type="protein sequence ID" value="ROT68323.1"/>
    <property type="molecule type" value="Genomic_DNA"/>
</dbReference>
<dbReference type="SMR" id="B7SNI3"/>
<dbReference type="STRING" id="6689.B7SNI3"/>
<dbReference type="Allergome" id="4052">
    <property type="allergen name" value="Lit v 3"/>
</dbReference>
<dbReference type="Allergome" id="4053">
    <property type="allergen name" value="Lit v 3.0101"/>
</dbReference>
<dbReference type="EnsemblMetazoa" id="XM_027368335.1">
    <property type="protein sequence ID" value="XP_027224136.1"/>
    <property type="gene ID" value="LOC113816291"/>
</dbReference>
<dbReference type="OrthoDB" id="429467at2759"/>
<dbReference type="Proteomes" id="UP000283509">
    <property type="component" value="Unassembled WGS sequence"/>
</dbReference>
<dbReference type="GO" id="GO:0016459">
    <property type="term" value="C:myosin complex"/>
    <property type="evidence" value="ECO:0007669"/>
    <property type="project" value="UniProtKB-KW"/>
</dbReference>
<dbReference type="GO" id="GO:0005509">
    <property type="term" value="F:calcium ion binding"/>
    <property type="evidence" value="ECO:0007669"/>
    <property type="project" value="InterPro"/>
</dbReference>
<dbReference type="FunFam" id="1.10.238.10:FF:000007">
    <property type="entry name" value="Putative myosin regulatory light chain sqh"/>
    <property type="match status" value="1"/>
</dbReference>
<dbReference type="Gene3D" id="1.10.238.10">
    <property type="entry name" value="EF-hand"/>
    <property type="match status" value="2"/>
</dbReference>
<dbReference type="InterPro" id="IPR011992">
    <property type="entry name" value="EF-hand-dom_pair"/>
</dbReference>
<dbReference type="InterPro" id="IPR018247">
    <property type="entry name" value="EF_Hand_1_Ca_BS"/>
</dbReference>
<dbReference type="InterPro" id="IPR002048">
    <property type="entry name" value="EF_hand_dom"/>
</dbReference>
<dbReference type="InterPro" id="IPR050403">
    <property type="entry name" value="Myosin_RLC"/>
</dbReference>
<dbReference type="PANTHER" id="PTHR23049">
    <property type="entry name" value="MYOSIN REGULATORY LIGHT CHAIN 2"/>
    <property type="match status" value="1"/>
</dbReference>
<dbReference type="SUPFAM" id="SSF47473">
    <property type="entry name" value="EF-hand"/>
    <property type="match status" value="1"/>
</dbReference>
<dbReference type="PROSITE" id="PS00018">
    <property type="entry name" value="EF_HAND_1"/>
    <property type="match status" value="1"/>
</dbReference>
<dbReference type="PROSITE" id="PS50222">
    <property type="entry name" value="EF_HAND_2"/>
    <property type="match status" value="2"/>
</dbReference>
<accession>B7SNI3</accession>
<protein>
    <recommendedName>
        <fullName evidence="9">Myosin regulatory light chain 2</fullName>
        <shortName evidence="9">MLC-2</shortName>
    </recommendedName>
    <alternativeName>
        <fullName evidence="6 7 8">Allergen Lit v 3</fullName>
    </alternativeName>
    <alternativeName>
        <fullName evidence="6 7 8">Myosin light chain</fullName>
        <shortName evidence="6 7 8">MLC</shortName>
    </alternativeName>
    <allergenName evidence="6">Lit v 3.0101</allergenName>
</protein>
<comment type="subunit">
    <text evidence="9">Myosin is a hexamer of 2 heavy chains and 4 light chains.</text>
</comment>
<comment type="tissue specificity">
    <text evidence="3">Expressed in tail muscle (at protein level).</text>
</comment>
<comment type="allergen">
    <text evidence="3 4 5">Causes an allergic reaction in human. Binds to IgE of patients allergic to shrimp (PubMed:18760458, PubMed:20471069, PubMed:22192087). Natural boiled protein binds to IgE in 55% of the 38 shrimp-allergic patients tested. Recombinant protein binds to IgE in 89% of the 19 patients tested allergic to the natural protein (PubMed:18760458). Epitope diversity and the frequency and intensity of IgE-binding is significantly more pronounced in children than in adults (PubMed:20471069). Patients (children or adults) with positive double-blind placebo-controlled food challenge (DBPCFC) to shrimp have a more frequent, intense and diverse recognition of the epitopes of this protein than those with negative challenge (PubMed:22192087).</text>
</comment>
<proteinExistence type="evidence at protein level"/>
<feature type="chain" id="PRO_0000456251" description="Myosin regulatory light chain 2">
    <location>
        <begin position="1"/>
        <end position="177"/>
    </location>
</feature>
<feature type="domain" description="EF-hand 1" evidence="1">
    <location>
        <begin position="30"/>
        <end position="65"/>
    </location>
</feature>
<feature type="domain" description="EF-hand 2" evidence="1">
    <location>
        <begin position="135"/>
        <end position="170"/>
    </location>
</feature>
<feature type="region of interest" description="Disordered" evidence="2">
    <location>
        <begin position="1"/>
        <end position="24"/>
    </location>
</feature>
<feature type="region of interest" description="IgE-binding epitope" evidence="4 5">
    <location>
        <begin position="13"/>
        <end position="30"/>
    </location>
</feature>
<feature type="region of interest" description="IgE-binding epitope" evidence="4 5">
    <location>
        <begin position="22"/>
        <end position="48"/>
    </location>
</feature>
<feature type="region of interest" description="IgE-binding epitope" evidence="4 5">
    <location>
        <begin position="49"/>
        <end position="66"/>
    </location>
</feature>
<feature type="region of interest" description="IgE-binding epitope" evidence="4 5">
    <location>
        <begin position="58"/>
        <end position="90"/>
    </location>
</feature>
<feature type="region of interest" description="IgE-binding epitope" evidence="4 5">
    <location>
        <begin position="79"/>
        <end position="99"/>
    </location>
</feature>
<feature type="region of interest" description="IgE-binding epitope" evidence="4 5">
    <location>
        <begin position="118"/>
        <end position="141"/>
    </location>
</feature>
<feature type="compositionally biased region" description="Basic residues" evidence="2">
    <location>
        <begin position="1"/>
        <end position="16"/>
    </location>
</feature>
<feature type="binding site" evidence="1">
    <location>
        <position position="43"/>
    </location>
    <ligand>
        <name>Ca(2+)</name>
        <dbReference type="ChEBI" id="CHEBI:29108"/>
    </ligand>
</feature>
<feature type="binding site" evidence="1">
    <location>
        <position position="45"/>
    </location>
    <ligand>
        <name>Ca(2+)</name>
        <dbReference type="ChEBI" id="CHEBI:29108"/>
    </ligand>
</feature>
<feature type="binding site" evidence="1">
    <location>
        <position position="47"/>
    </location>
    <ligand>
        <name>Ca(2+)</name>
        <dbReference type="ChEBI" id="CHEBI:29108"/>
    </ligand>
</feature>
<feature type="binding site" evidence="1">
    <location>
        <position position="54"/>
    </location>
    <ligand>
        <name>Ca(2+)</name>
        <dbReference type="ChEBI" id="CHEBI:29108"/>
    </ligand>
</feature>
<feature type="sequence conflict" description="In Ref. 1; AA sequence." evidence="9" ref="1">
    <original>G</original>
    <variation>K</variation>
    <location>
        <position position="18"/>
    </location>
</feature>
<feature type="sequence conflict" description="In Ref. 1; AA sequence." evidence="9" ref="1">
    <original>R</original>
    <variation>K</variation>
    <location>
        <position position="30"/>
    </location>
</feature>
<feature type="sequence conflict" description="In Ref. 1; AA sequence." evidence="9" ref="1">
    <original>QT</original>
    <variation>SS</variation>
    <location>
        <begin position="95"/>
        <end position="96"/>
    </location>
</feature>
<feature type="sequence conflict" description="In Ref. 1; AA sequence." evidence="9" ref="1">
    <original>KAFL</original>
    <variation>ASIR</variation>
    <location>
        <begin position="107"/>
        <end position="110"/>
    </location>
</feature>
<keyword id="KW-0020">Allergen</keyword>
<keyword id="KW-0106">Calcium</keyword>
<keyword id="KW-0903">Direct protein sequencing</keyword>
<keyword id="KW-0479">Metal-binding</keyword>
<keyword id="KW-0505">Motor protein</keyword>
<keyword id="KW-0514">Muscle protein</keyword>
<keyword id="KW-0518">Myosin</keyword>
<keyword id="KW-1185">Reference proteome</keyword>
<keyword id="KW-0677">Repeat</keyword>
<organism evidence="10">
    <name type="scientific">Penaeus vannamei</name>
    <name type="common">Whiteleg shrimp</name>
    <name type="synonym">Litopenaeus vannamei</name>
    <dbReference type="NCBI Taxonomy" id="6689"/>
    <lineage>
        <taxon>Eukaryota</taxon>
        <taxon>Metazoa</taxon>
        <taxon>Ecdysozoa</taxon>
        <taxon>Arthropoda</taxon>
        <taxon>Crustacea</taxon>
        <taxon>Multicrustacea</taxon>
        <taxon>Malacostraca</taxon>
        <taxon>Eumalacostraca</taxon>
        <taxon>Eucarida</taxon>
        <taxon>Decapoda</taxon>
        <taxon>Dendrobranchiata</taxon>
        <taxon>Penaeoidea</taxon>
        <taxon>Penaeidae</taxon>
        <taxon>Penaeus</taxon>
    </lineage>
</organism>
<evidence type="ECO:0000255" key="1">
    <source>
        <dbReference type="PROSITE-ProRule" id="PRU00448"/>
    </source>
</evidence>
<evidence type="ECO:0000256" key="2">
    <source>
        <dbReference type="SAM" id="MobiDB-lite"/>
    </source>
</evidence>
<evidence type="ECO:0000269" key="3">
    <source>
    </source>
</evidence>
<evidence type="ECO:0000269" key="4">
    <source>
    </source>
</evidence>
<evidence type="ECO:0000269" key="5">
    <source>
    </source>
</evidence>
<evidence type="ECO:0000303" key="6">
    <source>
    </source>
</evidence>
<evidence type="ECO:0000303" key="7">
    <source>
    </source>
</evidence>
<evidence type="ECO:0000303" key="8">
    <source>
    </source>
</evidence>
<evidence type="ECO:0000305" key="9"/>
<evidence type="ECO:0000312" key="10">
    <source>
        <dbReference type="EMBL" id="ACC76803.1"/>
    </source>
</evidence>
<evidence type="ECO:0000312" key="11">
    <source>
        <dbReference type="EMBL" id="ROT68323.1"/>
    </source>
</evidence>
<evidence type="ECO:0000312" key="12">
    <source>
        <dbReference type="Proteomes" id="UP000283509"/>
    </source>
</evidence>
<reference evidence="10" key="1">
    <citation type="journal article" date="2008" name="J. Allergy Clin. Immunol.">
        <title>Myosin light chain is a novel shrimp allergen, Lit v 3.</title>
        <authorList>
            <person name="Ayuso R."/>
            <person name="Grishina G."/>
            <person name="Bardina L."/>
            <person name="Carrillo T."/>
            <person name="Blanco C."/>
            <person name="Ibanez M.D."/>
            <person name="Sampson H.A."/>
            <person name="Beyer K."/>
        </authorList>
    </citation>
    <scope>NUCLEOTIDE SEQUENCE [MRNA]</scope>
    <scope>PROTEIN SEQUENCE OF 18-30 AND 95-110</scope>
    <scope>TISSUE SPECIFICITY</scope>
    <scope>IDENTIFICATION BY MASS SPECTROMETRY</scope>
    <scope>ALLERGEN</scope>
</reference>
<reference evidence="11 12" key="2">
    <citation type="submission" date="2019-01" db="EMBL/GenBank/DDBJ databases">
        <title>The decoding of complex shrimp genome reveals the adaptation for benthos swimmer, frequently molting mechanism and breeding impact on genome.</title>
        <authorList>
            <person name="Sun Y."/>
            <person name="Gao Y."/>
            <person name="Yu Y."/>
        </authorList>
    </citation>
    <scope>NUCLEOTIDE SEQUENCE [LARGE SCALE GENOMIC DNA]</scope>
    <source>
        <tissue evidence="11">Muscle</tissue>
    </source>
</reference>
<reference key="3">
    <citation type="journal article" date="2010" name="J. Allergy Clin. Immunol.">
        <title>Greater epitope recognition of shrimp allergens by children than by adults suggests that shrimp sensitization decreases with age.</title>
        <authorList>
            <person name="Ayuso R."/>
            <person name="Sanchez-Garcia S."/>
            <person name="Lin J."/>
            <person name="Fu Z."/>
            <person name="Ibanez M.D."/>
            <person name="Carrillo T."/>
            <person name="Blanco C."/>
            <person name="Goldis M."/>
            <person name="Bardina L."/>
            <person name="Sastre J."/>
            <person name="Sampson H.A."/>
        </authorList>
    </citation>
    <scope>ALLERGEN</scope>
    <scope>REGIONS</scope>
</reference>
<reference key="4">
    <citation type="journal article" date="2012" name="Clin. Exp. Allergy">
        <title>Is epitope recognition of shrimp allergens useful to predict clinical reactivity?</title>
        <authorList>
            <person name="Ayuso R."/>
            <person name="Sanchez-Garcia S."/>
            <person name="Pascal M."/>
            <person name="Lin J."/>
            <person name="Grishina G."/>
            <person name="Fu Z."/>
            <person name="Ibanez M.D."/>
            <person name="Sastre J."/>
            <person name="Sampson H.A."/>
        </authorList>
    </citation>
    <scope>ALLERGEN</scope>
    <scope>REGIONS</scope>
</reference>
<sequence length="177" mass="19269">MSRKSGSRSSSKRSKKSGGGSNVFDMFTQRQVAEFKEGFQLMDRDKDGVIGKTDLRGTFDEIGRIATDQELDEMLADAPAPINFTMLLNMFAERQTGESDDDDVVAKAFLAFADEEGNIDCDTFRHALMTWGDKFSSQEADDALDQMDIDDGGKIDVQGVIQMLTAGGGDDAAAEEA</sequence>
<gene>
    <name evidence="11" type="ORF">C7M84_013542</name>
</gene>